<name>FDH1_YEAS7</name>
<evidence type="ECO:0000255" key="1">
    <source>
        <dbReference type="HAMAP-Rule" id="MF_03210"/>
    </source>
</evidence>
<accession>A6ZN46</accession>
<protein>
    <recommendedName>
        <fullName evidence="1">Formate dehydrogenase 1</fullName>
        <shortName evidence="1">FDH</shortName>
        <ecNumber evidence="1">1.17.1.9</ecNumber>
    </recommendedName>
    <alternativeName>
        <fullName evidence="1">NAD-dependent formate dehydrogenase</fullName>
    </alternativeName>
</protein>
<feature type="chain" id="PRO_0000393441" description="Formate dehydrogenase 1">
    <location>
        <begin position="1"/>
        <end position="376"/>
    </location>
</feature>
<feature type="binding site" evidence="1">
    <location>
        <position position="97"/>
    </location>
    <ligand>
        <name>substrate</name>
    </ligand>
</feature>
<feature type="binding site" evidence="1">
    <location>
        <position position="121"/>
    </location>
    <ligand>
        <name>substrate</name>
    </ligand>
</feature>
<feature type="binding site" evidence="1">
    <location>
        <begin position="176"/>
        <end position="177"/>
    </location>
    <ligand>
        <name>NAD(+)</name>
        <dbReference type="ChEBI" id="CHEBI:57540"/>
    </ligand>
</feature>
<feature type="binding site" evidence="1">
    <location>
        <position position="197"/>
    </location>
    <ligand>
        <name>NAD(+)</name>
        <dbReference type="ChEBI" id="CHEBI:57540"/>
    </ligand>
</feature>
<feature type="binding site" evidence="1">
    <location>
        <begin position="244"/>
        <end position="248"/>
    </location>
    <ligand>
        <name>NAD(+)</name>
        <dbReference type="ChEBI" id="CHEBI:57540"/>
    </ligand>
</feature>
<feature type="binding site" evidence="1">
    <location>
        <position position="270"/>
    </location>
    <ligand>
        <name>NAD(+)</name>
        <dbReference type="ChEBI" id="CHEBI:57540"/>
    </ligand>
</feature>
<feature type="binding site" evidence="1">
    <location>
        <position position="296"/>
    </location>
    <ligand>
        <name>NAD(+)</name>
        <dbReference type="ChEBI" id="CHEBI:57540"/>
    </ligand>
</feature>
<feature type="binding site" evidence="1">
    <location>
        <begin position="325"/>
        <end position="328"/>
    </location>
    <ligand>
        <name>NAD(+)</name>
        <dbReference type="ChEBI" id="CHEBI:57540"/>
    </ligand>
</feature>
<feature type="site" description="Important for catalytic activity" evidence="1">
    <location>
        <position position="272"/>
    </location>
</feature>
<feature type="site" description="Important for catalytic activity" evidence="1">
    <location>
        <position position="325"/>
    </location>
</feature>
<dbReference type="EC" id="1.17.1.9" evidence="1"/>
<dbReference type="EMBL" id="AAFW02000028">
    <property type="protein sequence ID" value="EDN64042.1"/>
    <property type="molecule type" value="Genomic_DNA"/>
</dbReference>
<dbReference type="SMR" id="A6ZN46"/>
<dbReference type="HOGENOM" id="CLU_019796_0_0_1"/>
<dbReference type="Proteomes" id="UP000007060">
    <property type="component" value="Unassembled WGS sequence"/>
</dbReference>
<dbReference type="GO" id="GO:0005829">
    <property type="term" value="C:cytosol"/>
    <property type="evidence" value="ECO:0007669"/>
    <property type="project" value="TreeGrafter"/>
</dbReference>
<dbReference type="GO" id="GO:0008863">
    <property type="term" value="F:formate dehydrogenase (NAD+) activity"/>
    <property type="evidence" value="ECO:0007669"/>
    <property type="project" value="UniProtKB-UniRule"/>
</dbReference>
<dbReference type="GO" id="GO:0051287">
    <property type="term" value="F:NAD binding"/>
    <property type="evidence" value="ECO:0007669"/>
    <property type="project" value="InterPro"/>
</dbReference>
<dbReference type="GO" id="GO:0016616">
    <property type="term" value="F:oxidoreductase activity, acting on the CH-OH group of donors, NAD or NADP as acceptor"/>
    <property type="evidence" value="ECO:0007669"/>
    <property type="project" value="InterPro"/>
</dbReference>
<dbReference type="GO" id="GO:0042183">
    <property type="term" value="P:formate catabolic process"/>
    <property type="evidence" value="ECO:0007669"/>
    <property type="project" value="UniProtKB-UniRule"/>
</dbReference>
<dbReference type="CDD" id="cd05302">
    <property type="entry name" value="FDH"/>
    <property type="match status" value="1"/>
</dbReference>
<dbReference type="FunFam" id="3.40.50.720:FF:000057">
    <property type="entry name" value="Formate dehydrogenase"/>
    <property type="match status" value="1"/>
</dbReference>
<dbReference type="FunFam" id="3.40.50.720:FF:000862">
    <property type="entry name" value="Formate dehydrogenase chloroplastic/mitochondrial"/>
    <property type="match status" value="1"/>
</dbReference>
<dbReference type="Gene3D" id="3.40.50.720">
    <property type="entry name" value="NAD(P)-binding Rossmann-like Domain"/>
    <property type="match status" value="2"/>
</dbReference>
<dbReference type="HAMAP" id="MF_03210">
    <property type="entry name" value="Formate_dehydrogenase"/>
    <property type="match status" value="1"/>
</dbReference>
<dbReference type="InterPro" id="IPR006139">
    <property type="entry name" value="D-isomer_2_OHA_DH_cat_dom"/>
</dbReference>
<dbReference type="InterPro" id="IPR029753">
    <property type="entry name" value="D-isomer_DH_CS"/>
</dbReference>
<dbReference type="InterPro" id="IPR006140">
    <property type="entry name" value="D-isomer_DH_NAD-bd"/>
</dbReference>
<dbReference type="InterPro" id="IPR033689">
    <property type="entry name" value="FDH_NAD-dep"/>
</dbReference>
<dbReference type="InterPro" id="IPR036291">
    <property type="entry name" value="NAD(P)-bd_dom_sf"/>
</dbReference>
<dbReference type="NCBIfam" id="NF005750">
    <property type="entry name" value="PRK07574.1"/>
    <property type="match status" value="1"/>
</dbReference>
<dbReference type="PANTHER" id="PTHR42938">
    <property type="entry name" value="FORMATE DEHYDROGENASE 1"/>
    <property type="match status" value="1"/>
</dbReference>
<dbReference type="PANTHER" id="PTHR42938:SF9">
    <property type="entry name" value="FORMATE DEHYDROGENASE 1"/>
    <property type="match status" value="1"/>
</dbReference>
<dbReference type="Pfam" id="PF00389">
    <property type="entry name" value="2-Hacid_dh"/>
    <property type="match status" value="1"/>
</dbReference>
<dbReference type="Pfam" id="PF02826">
    <property type="entry name" value="2-Hacid_dh_C"/>
    <property type="match status" value="1"/>
</dbReference>
<dbReference type="SUPFAM" id="SSF52283">
    <property type="entry name" value="Formate/glycerate dehydrogenase catalytic domain-like"/>
    <property type="match status" value="1"/>
</dbReference>
<dbReference type="SUPFAM" id="SSF51735">
    <property type="entry name" value="NAD(P)-binding Rossmann-fold domains"/>
    <property type="match status" value="1"/>
</dbReference>
<dbReference type="PROSITE" id="PS00670">
    <property type="entry name" value="D_2_HYDROXYACID_DH_2"/>
    <property type="match status" value="1"/>
</dbReference>
<dbReference type="PROSITE" id="PS00671">
    <property type="entry name" value="D_2_HYDROXYACID_DH_3"/>
    <property type="match status" value="1"/>
</dbReference>
<keyword id="KW-0963">Cytoplasm</keyword>
<keyword id="KW-0520">NAD</keyword>
<keyword id="KW-0560">Oxidoreductase</keyword>
<comment type="function">
    <text evidence="1">Catalyzes the NAD(+)-dependent oxidation of formate to carbon dioxide. Formate oxidation is the final step in the methanol oxidation pathway in methylotrophic microorganisms. Has a role in the detoxification of exogenous formate in non-methylotrophic organisms.</text>
</comment>
<comment type="catalytic activity">
    <reaction evidence="1">
        <text>formate + NAD(+) = CO2 + NADH</text>
        <dbReference type="Rhea" id="RHEA:15985"/>
        <dbReference type="ChEBI" id="CHEBI:15740"/>
        <dbReference type="ChEBI" id="CHEBI:16526"/>
        <dbReference type="ChEBI" id="CHEBI:57540"/>
        <dbReference type="ChEBI" id="CHEBI:57945"/>
        <dbReference type="EC" id="1.17.1.9"/>
    </reaction>
</comment>
<comment type="subunit">
    <text evidence="1">Homodimer.</text>
</comment>
<comment type="subcellular location">
    <subcellularLocation>
        <location evidence="1">Cytoplasm</location>
    </subcellularLocation>
</comment>
<comment type="induction">
    <text>Induced by formate.</text>
</comment>
<comment type="similarity">
    <text evidence="1">Belongs to the D-isomer specific 2-hydroxyacid dehydrogenase family. FDH subfamily.</text>
</comment>
<reference key="1">
    <citation type="journal article" date="2007" name="Proc. Natl. Acad. Sci. U.S.A.">
        <title>Genome sequencing and comparative analysis of Saccharomyces cerevisiae strain YJM789.</title>
        <authorList>
            <person name="Wei W."/>
            <person name="McCusker J.H."/>
            <person name="Hyman R.W."/>
            <person name="Jones T."/>
            <person name="Ning Y."/>
            <person name="Cao Z."/>
            <person name="Gu Z."/>
            <person name="Bruno D."/>
            <person name="Miranda M."/>
            <person name="Nguyen M."/>
            <person name="Wilhelmy J."/>
            <person name="Komp C."/>
            <person name="Tamse R."/>
            <person name="Wang X."/>
            <person name="Jia P."/>
            <person name="Luedi P."/>
            <person name="Oefner P.J."/>
            <person name="David L."/>
            <person name="Dietrich F.S."/>
            <person name="Li Y."/>
            <person name="Davis R.W."/>
            <person name="Steinmetz L.M."/>
        </authorList>
    </citation>
    <scope>NUCLEOTIDE SEQUENCE [LARGE SCALE GENOMIC DNA]</scope>
    <source>
        <strain>YJM789</strain>
    </source>
</reference>
<organism>
    <name type="scientific">Saccharomyces cerevisiae (strain YJM789)</name>
    <name type="common">Baker's yeast</name>
    <dbReference type="NCBI Taxonomy" id="307796"/>
    <lineage>
        <taxon>Eukaryota</taxon>
        <taxon>Fungi</taxon>
        <taxon>Dikarya</taxon>
        <taxon>Ascomycota</taxon>
        <taxon>Saccharomycotina</taxon>
        <taxon>Saccharomycetes</taxon>
        <taxon>Saccharomycetales</taxon>
        <taxon>Saccharomycetaceae</taxon>
        <taxon>Saccharomyces</taxon>
    </lineage>
</organism>
<gene>
    <name type="primary">FDH1</name>
    <name type="ORF">SCY_4914</name>
</gene>
<sequence length="376" mass="41714">MSKGKVLLVLYEGGKHAEEQEKLLGCIENELGIRNFIEEQGYELVTTIDKDPEPTSTVDRELKDAEIVITTPFFPAYISRNRIAEAPNLKLCVTAGVGSDHVDLEAANERKITVTEVTGSNVVSVAEHVMATILVLIRNYNGGHQQAINGEWDIAGVAKNEYDLEDKIISTVGAGRIGYRVLERLVAFNPKKLLYYDYQELPAEAINRLNEASKLFNGRGDIVQRVEKLEDMVAQSDVVTINCPLHKDSRGLFNKKLISHMKDGAYLVNTARGAICVAEDVAEAVKSGKLAGYGGDVWDKQPAPKDHPWRTMDNKDHVGNAMTVHISGTSLDAQKRYAQGVKNILNSYFSKKFDYRPQDIIVQNGSYATRAYGQKK</sequence>
<proteinExistence type="evidence at transcript level"/>